<evidence type="ECO:0000255" key="1">
    <source>
        <dbReference type="HAMAP-Rule" id="MF_00185"/>
    </source>
</evidence>
<evidence type="ECO:0000305" key="2"/>
<name>MIAA_STUS1</name>
<accession>A4VQP1</accession>
<organism>
    <name type="scientific">Stutzerimonas stutzeri (strain A1501)</name>
    <name type="common">Pseudomonas stutzeri</name>
    <dbReference type="NCBI Taxonomy" id="379731"/>
    <lineage>
        <taxon>Bacteria</taxon>
        <taxon>Pseudomonadati</taxon>
        <taxon>Pseudomonadota</taxon>
        <taxon>Gammaproteobacteria</taxon>
        <taxon>Pseudomonadales</taxon>
        <taxon>Pseudomonadaceae</taxon>
        <taxon>Stutzerimonas</taxon>
    </lineage>
</organism>
<proteinExistence type="inferred from homology"/>
<reference key="1">
    <citation type="journal article" date="2008" name="Proc. Natl. Acad. Sci. U.S.A.">
        <title>Nitrogen fixation island and rhizosphere competence traits in the genome of root-associated Pseudomonas stutzeri A1501.</title>
        <authorList>
            <person name="Yan Y."/>
            <person name="Yang J."/>
            <person name="Dou Y."/>
            <person name="Chen M."/>
            <person name="Ping S."/>
            <person name="Peng J."/>
            <person name="Lu W."/>
            <person name="Zhang W."/>
            <person name="Yao Z."/>
            <person name="Li H."/>
            <person name="Liu W."/>
            <person name="He S."/>
            <person name="Geng L."/>
            <person name="Zhang X."/>
            <person name="Yang F."/>
            <person name="Yu H."/>
            <person name="Zhan Y."/>
            <person name="Li D."/>
            <person name="Lin Z."/>
            <person name="Wang Y."/>
            <person name="Elmerich C."/>
            <person name="Lin M."/>
            <person name="Jin Q."/>
        </authorList>
    </citation>
    <scope>NUCLEOTIDE SEQUENCE [LARGE SCALE GENOMIC DNA]</scope>
    <source>
        <strain>A1501</strain>
    </source>
</reference>
<feature type="chain" id="PRO_0000377272" description="tRNA dimethylallyltransferase">
    <location>
        <begin position="1"/>
        <end position="323"/>
    </location>
</feature>
<feature type="region of interest" description="Interaction with substrate tRNA" evidence="1">
    <location>
        <begin position="37"/>
        <end position="40"/>
    </location>
</feature>
<feature type="region of interest" description="Interaction with substrate tRNA" evidence="1">
    <location>
        <begin position="161"/>
        <end position="165"/>
    </location>
</feature>
<feature type="binding site" evidence="1">
    <location>
        <begin position="12"/>
        <end position="19"/>
    </location>
    <ligand>
        <name>ATP</name>
        <dbReference type="ChEBI" id="CHEBI:30616"/>
    </ligand>
</feature>
<feature type="binding site" evidence="1">
    <location>
        <begin position="14"/>
        <end position="19"/>
    </location>
    <ligand>
        <name>substrate</name>
    </ligand>
</feature>
<feature type="site" description="Interaction with substrate tRNA" evidence="1">
    <location>
        <position position="103"/>
    </location>
</feature>
<feature type="site" description="Interaction with substrate tRNA" evidence="1">
    <location>
        <position position="125"/>
    </location>
</feature>
<sequence length="323" mass="35463">MSSLPPAIFLMGPTASGKTDLALELARVLPCELISVDSALVYRGMDIGTAKPSADVLAQFPHRLVDILDPAESYSAAEFSSDALAAMAEITAAGRIPLLVGGTMLYFKALQEGLADMPAADASVRAELEALAASEGLQVLHDRLAQVDPESAARIHPNDPQRLVRALEVYCVSGLTMSEHRARQRSQKAGPDAPGSGVLPYTVAQLCIAPAQRHILHERIERRFRHMVEQGFVEEVEALRSRGDLHLGMPSIRAVGYRQVWEYLDGSSTREEMVERGIIATRQLAKRQFTWLRSWGEVHWLDSLSCDNLPRALKYLQSLSILS</sequence>
<protein>
    <recommendedName>
        <fullName evidence="1">tRNA dimethylallyltransferase</fullName>
        <ecNumber evidence="1">2.5.1.75</ecNumber>
    </recommendedName>
    <alternativeName>
        <fullName evidence="1">Dimethylallyl diphosphate:tRNA dimethylallyltransferase</fullName>
        <shortName evidence="1">DMAPP:tRNA dimethylallyltransferase</shortName>
        <shortName evidence="1">DMATase</shortName>
    </alternativeName>
    <alternativeName>
        <fullName evidence="1">Isopentenyl-diphosphate:tRNA isopentenyltransferase</fullName>
        <shortName evidence="1">IPP transferase</shortName>
        <shortName evidence="1">IPPT</shortName>
        <shortName evidence="1">IPTase</shortName>
    </alternativeName>
</protein>
<dbReference type="EC" id="2.5.1.75" evidence="1"/>
<dbReference type="EMBL" id="CP000304">
    <property type="protein sequence ID" value="ABP81292.1"/>
    <property type="status" value="ALT_INIT"/>
    <property type="molecule type" value="Genomic_DNA"/>
</dbReference>
<dbReference type="RefSeq" id="WP_017246074.1">
    <property type="nucleotide sequence ID" value="NC_009434.1"/>
</dbReference>
<dbReference type="SMR" id="A4VQP1"/>
<dbReference type="KEGG" id="psa:PST_3669"/>
<dbReference type="eggNOG" id="COG0324">
    <property type="taxonomic scope" value="Bacteria"/>
</dbReference>
<dbReference type="HOGENOM" id="CLU_032616_0_0_6"/>
<dbReference type="Proteomes" id="UP000000233">
    <property type="component" value="Chromosome"/>
</dbReference>
<dbReference type="GO" id="GO:0005524">
    <property type="term" value="F:ATP binding"/>
    <property type="evidence" value="ECO:0007669"/>
    <property type="project" value="UniProtKB-UniRule"/>
</dbReference>
<dbReference type="GO" id="GO:0052381">
    <property type="term" value="F:tRNA dimethylallyltransferase activity"/>
    <property type="evidence" value="ECO:0007669"/>
    <property type="project" value="UniProtKB-UniRule"/>
</dbReference>
<dbReference type="GO" id="GO:0006400">
    <property type="term" value="P:tRNA modification"/>
    <property type="evidence" value="ECO:0007669"/>
    <property type="project" value="TreeGrafter"/>
</dbReference>
<dbReference type="FunFam" id="1.10.20.140:FF:000001">
    <property type="entry name" value="tRNA dimethylallyltransferase"/>
    <property type="match status" value="1"/>
</dbReference>
<dbReference type="Gene3D" id="1.10.20.140">
    <property type="match status" value="1"/>
</dbReference>
<dbReference type="Gene3D" id="3.40.50.300">
    <property type="entry name" value="P-loop containing nucleotide triphosphate hydrolases"/>
    <property type="match status" value="1"/>
</dbReference>
<dbReference type="HAMAP" id="MF_00185">
    <property type="entry name" value="IPP_trans"/>
    <property type="match status" value="1"/>
</dbReference>
<dbReference type="InterPro" id="IPR039657">
    <property type="entry name" value="Dimethylallyltransferase"/>
</dbReference>
<dbReference type="InterPro" id="IPR018022">
    <property type="entry name" value="IPT"/>
</dbReference>
<dbReference type="InterPro" id="IPR027417">
    <property type="entry name" value="P-loop_NTPase"/>
</dbReference>
<dbReference type="NCBIfam" id="TIGR00174">
    <property type="entry name" value="miaA"/>
    <property type="match status" value="1"/>
</dbReference>
<dbReference type="PANTHER" id="PTHR11088">
    <property type="entry name" value="TRNA DIMETHYLALLYLTRANSFERASE"/>
    <property type="match status" value="1"/>
</dbReference>
<dbReference type="PANTHER" id="PTHR11088:SF60">
    <property type="entry name" value="TRNA DIMETHYLALLYLTRANSFERASE"/>
    <property type="match status" value="1"/>
</dbReference>
<dbReference type="Pfam" id="PF01715">
    <property type="entry name" value="IPPT"/>
    <property type="match status" value="1"/>
</dbReference>
<dbReference type="SUPFAM" id="SSF52540">
    <property type="entry name" value="P-loop containing nucleoside triphosphate hydrolases"/>
    <property type="match status" value="2"/>
</dbReference>
<comment type="function">
    <text evidence="1">Catalyzes the transfer of a dimethylallyl group onto the adenine at position 37 in tRNAs that read codons beginning with uridine, leading to the formation of N6-(dimethylallyl)adenosine (i(6)A).</text>
</comment>
<comment type="catalytic activity">
    <reaction evidence="1">
        <text>adenosine(37) in tRNA + dimethylallyl diphosphate = N(6)-dimethylallyladenosine(37) in tRNA + diphosphate</text>
        <dbReference type="Rhea" id="RHEA:26482"/>
        <dbReference type="Rhea" id="RHEA-COMP:10162"/>
        <dbReference type="Rhea" id="RHEA-COMP:10375"/>
        <dbReference type="ChEBI" id="CHEBI:33019"/>
        <dbReference type="ChEBI" id="CHEBI:57623"/>
        <dbReference type="ChEBI" id="CHEBI:74411"/>
        <dbReference type="ChEBI" id="CHEBI:74415"/>
        <dbReference type="EC" id="2.5.1.75"/>
    </reaction>
</comment>
<comment type="cofactor">
    <cofactor evidence="1">
        <name>Mg(2+)</name>
        <dbReference type="ChEBI" id="CHEBI:18420"/>
    </cofactor>
</comment>
<comment type="subunit">
    <text evidence="1">Monomer.</text>
</comment>
<comment type="similarity">
    <text evidence="1">Belongs to the IPP transferase family.</text>
</comment>
<comment type="sequence caution" evidence="2">
    <conflict type="erroneous initiation">
        <sequence resource="EMBL-CDS" id="ABP81292"/>
    </conflict>
</comment>
<keyword id="KW-0067">ATP-binding</keyword>
<keyword id="KW-0460">Magnesium</keyword>
<keyword id="KW-0547">Nucleotide-binding</keyword>
<keyword id="KW-1185">Reference proteome</keyword>
<keyword id="KW-0808">Transferase</keyword>
<keyword id="KW-0819">tRNA processing</keyword>
<gene>
    <name evidence="1" type="primary">miaA</name>
    <name type="ordered locus">PST_3669</name>
</gene>